<organism>
    <name type="scientific">Geobacillus thermodenitrificans (strain NG80-2)</name>
    <dbReference type="NCBI Taxonomy" id="420246"/>
    <lineage>
        <taxon>Bacteria</taxon>
        <taxon>Bacillati</taxon>
        <taxon>Bacillota</taxon>
        <taxon>Bacilli</taxon>
        <taxon>Bacillales</taxon>
        <taxon>Anoxybacillaceae</taxon>
        <taxon>Geobacillus</taxon>
    </lineage>
</organism>
<accession>A4IJX3</accession>
<comment type="function">
    <text evidence="1">Part of the phosphoribosylformylglycinamidine synthase complex involved in the purines biosynthetic pathway. Catalyzes the ATP-dependent conversion of formylglycinamide ribonucleotide (FGAR) and glutamine to yield formylglycinamidine ribonucleotide (FGAM) and glutamate. The FGAM synthase complex is composed of three subunits. PurQ produces an ammonia molecule by converting glutamine to glutamate. PurL transfers the ammonia molecule to FGAR to form FGAM in an ATP-dependent manner. PurS interacts with PurQ and PurL and is thought to assist in the transfer of the ammonia molecule from PurQ to PurL.</text>
</comment>
<comment type="catalytic activity">
    <reaction evidence="1">
        <text>N(2)-formyl-N(1)-(5-phospho-beta-D-ribosyl)glycinamide + L-glutamine + ATP + H2O = 2-formamido-N(1)-(5-O-phospho-beta-D-ribosyl)acetamidine + L-glutamate + ADP + phosphate + H(+)</text>
        <dbReference type="Rhea" id="RHEA:17129"/>
        <dbReference type="ChEBI" id="CHEBI:15377"/>
        <dbReference type="ChEBI" id="CHEBI:15378"/>
        <dbReference type="ChEBI" id="CHEBI:29985"/>
        <dbReference type="ChEBI" id="CHEBI:30616"/>
        <dbReference type="ChEBI" id="CHEBI:43474"/>
        <dbReference type="ChEBI" id="CHEBI:58359"/>
        <dbReference type="ChEBI" id="CHEBI:147286"/>
        <dbReference type="ChEBI" id="CHEBI:147287"/>
        <dbReference type="ChEBI" id="CHEBI:456216"/>
        <dbReference type="EC" id="6.3.5.3"/>
    </reaction>
</comment>
<comment type="pathway">
    <text evidence="1">Purine metabolism; IMP biosynthesis via de novo pathway; 5-amino-1-(5-phospho-D-ribosyl)imidazole from N(2)-formyl-N(1)-(5-phospho-D-ribosyl)glycinamide: step 1/2.</text>
</comment>
<comment type="subunit">
    <text evidence="1">Monomer. Part of the FGAM synthase complex composed of 1 PurL, 1 PurQ and 2 PurS subunits.</text>
</comment>
<comment type="subcellular location">
    <subcellularLocation>
        <location evidence="1">Cytoplasm</location>
    </subcellularLocation>
</comment>
<comment type="similarity">
    <text evidence="1">Belongs to the FGAMS family.</text>
</comment>
<dbReference type="EC" id="6.3.5.3" evidence="1"/>
<dbReference type="EMBL" id="CP000557">
    <property type="protein sequence ID" value="ABO65627.1"/>
    <property type="molecule type" value="Genomic_DNA"/>
</dbReference>
<dbReference type="RefSeq" id="WP_008881463.1">
    <property type="nucleotide sequence ID" value="NC_009328.1"/>
</dbReference>
<dbReference type="SMR" id="A4IJX3"/>
<dbReference type="GeneID" id="87622152"/>
<dbReference type="KEGG" id="gtn:GTNG_0243"/>
<dbReference type="eggNOG" id="COG0046">
    <property type="taxonomic scope" value="Bacteria"/>
</dbReference>
<dbReference type="HOGENOM" id="CLU_003100_0_1_9"/>
<dbReference type="UniPathway" id="UPA00074">
    <property type="reaction ID" value="UER00128"/>
</dbReference>
<dbReference type="Proteomes" id="UP000001578">
    <property type="component" value="Chromosome"/>
</dbReference>
<dbReference type="GO" id="GO:0005737">
    <property type="term" value="C:cytoplasm"/>
    <property type="evidence" value="ECO:0007669"/>
    <property type="project" value="UniProtKB-SubCell"/>
</dbReference>
<dbReference type="GO" id="GO:0005524">
    <property type="term" value="F:ATP binding"/>
    <property type="evidence" value="ECO:0007669"/>
    <property type="project" value="UniProtKB-UniRule"/>
</dbReference>
<dbReference type="GO" id="GO:0000287">
    <property type="term" value="F:magnesium ion binding"/>
    <property type="evidence" value="ECO:0007669"/>
    <property type="project" value="UniProtKB-UniRule"/>
</dbReference>
<dbReference type="GO" id="GO:0004642">
    <property type="term" value="F:phosphoribosylformylglycinamidine synthase activity"/>
    <property type="evidence" value="ECO:0007669"/>
    <property type="project" value="UniProtKB-UniRule"/>
</dbReference>
<dbReference type="GO" id="GO:0006189">
    <property type="term" value="P:'de novo' IMP biosynthetic process"/>
    <property type="evidence" value="ECO:0007669"/>
    <property type="project" value="UniProtKB-UniRule"/>
</dbReference>
<dbReference type="CDD" id="cd02203">
    <property type="entry name" value="PurL_repeat1"/>
    <property type="match status" value="1"/>
</dbReference>
<dbReference type="CDD" id="cd02204">
    <property type="entry name" value="PurL_repeat2"/>
    <property type="match status" value="1"/>
</dbReference>
<dbReference type="FunFam" id="3.30.1330.10:FF:000004">
    <property type="entry name" value="Phosphoribosylformylglycinamidine synthase subunit PurL"/>
    <property type="match status" value="1"/>
</dbReference>
<dbReference type="FunFam" id="3.30.1330.10:FF:000011">
    <property type="entry name" value="Phosphoribosylformylglycinamidine synthase subunit PurL"/>
    <property type="match status" value="1"/>
</dbReference>
<dbReference type="FunFam" id="3.90.650.10:FF:000009">
    <property type="entry name" value="Phosphoribosylformylglycinamidine synthase subunit PurL"/>
    <property type="match status" value="1"/>
</dbReference>
<dbReference type="Gene3D" id="3.90.650.10">
    <property type="entry name" value="PurM-like C-terminal domain"/>
    <property type="match status" value="2"/>
</dbReference>
<dbReference type="Gene3D" id="3.30.1330.10">
    <property type="entry name" value="PurM-like, N-terminal domain"/>
    <property type="match status" value="2"/>
</dbReference>
<dbReference type="HAMAP" id="MF_00420">
    <property type="entry name" value="PurL_2"/>
    <property type="match status" value="1"/>
</dbReference>
<dbReference type="InterPro" id="IPR010074">
    <property type="entry name" value="PRibForGlyAmidine_synth_PurL"/>
</dbReference>
<dbReference type="InterPro" id="IPR041609">
    <property type="entry name" value="PurL_linker"/>
</dbReference>
<dbReference type="InterPro" id="IPR010918">
    <property type="entry name" value="PurM-like_C_dom"/>
</dbReference>
<dbReference type="InterPro" id="IPR036676">
    <property type="entry name" value="PurM-like_C_sf"/>
</dbReference>
<dbReference type="InterPro" id="IPR016188">
    <property type="entry name" value="PurM-like_N"/>
</dbReference>
<dbReference type="InterPro" id="IPR036921">
    <property type="entry name" value="PurM-like_N_sf"/>
</dbReference>
<dbReference type="NCBIfam" id="TIGR01736">
    <property type="entry name" value="FGAM_synth_II"/>
    <property type="match status" value="1"/>
</dbReference>
<dbReference type="NCBIfam" id="NF002290">
    <property type="entry name" value="PRK01213.1"/>
    <property type="match status" value="1"/>
</dbReference>
<dbReference type="PANTHER" id="PTHR43555">
    <property type="entry name" value="PHOSPHORIBOSYLFORMYLGLYCINAMIDINE SYNTHASE SUBUNIT PURL"/>
    <property type="match status" value="1"/>
</dbReference>
<dbReference type="PANTHER" id="PTHR43555:SF1">
    <property type="entry name" value="PHOSPHORIBOSYLFORMYLGLYCINAMIDINE SYNTHASE SUBUNIT PURL"/>
    <property type="match status" value="1"/>
</dbReference>
<dbReference type="Pfam" id="PF00586">
    <property type="entry name" value="AIRS"/>
    <property type="match status" value="2"/>
</dbReference>
<dbReference type="Pfam" id="PF02769">
    <property type="entry name" value="AIRS_C"/>
    <property type="match status" value="2"/>
</dbReference>
<dbReference type="Pfam" id="PF18072">
    <property type="entry name" value="FGAR-AT_linker"/>
    <property type="match status" value="1"/>
</dbReference>
<dbReference type="PIRSF" id="PIRSF001587">
    <property type="entry name" value="FGAM_synthase_II"/>
    <property type="match status" value="1"/>
</dbReference>
<dbReference type="SUPFAM" id="SSF56042">
    <property type="entry name" value="PurM C-terminal domain-like"/>
    <property type="match status" value="2"/>
</dbReference>
<dbReference type="SUPFAM" id="SSF55326">
    <property type="entry name" value="PurM N-terminal domain-like"/>
    <property type="match status" value="2"/>
</dbReference>
<reference key="1">
    <citation type="journal article" date="2007" name="Proc. Natl. Acad. Sci. U.S.A.">
        <title>Genome and proteome of long-chain alkane degrading Geobacillus thermodenitrificans NG80-2 isolated from a deep-subsurface oil reservoir.</title>
        <authorList>
            <person name="Feng L."/>
            <person name="Wang W."/>
            <person name="Cheng J."/>
            <person name="Ren Y."/>
            <person name="Zhao G."/>
            <person name="Gao C."/>
            <person name="Tang Y."/>
            <person name="Liu X."/>
            <person name="Han W."/>
            <person name="Peng X."/>
            <person name="Liu R."/>
            <person name="Wang L."/>
        </authorList>
    </citation>
    <scope>NUCLEOTIDE SEQUENCE [LARGE SCALE GENOMIC DNA]</scope>
    <source>
        <strain>NG80-2</strain>
    </source>
</reference>
<evidence type="ECO:0000255" key="1">
    <source>
        <dbReference type="HAMAP-Rule" id="MF_00420"/>
    </source>
</evidence>
<feature type="chain" id="PRO_1000050308" description="Phosphoribosylformylglycinamidine synthase subunit PurL">
    <location>
        <begin position="1"/>
        <end position="742"/>
    </location>
</feature>
<feature type="active site" evidence="1">
    <location>
        <position position="54"/>
    </location>
</feature>
<feature type="active site" description="Proton acceptor" evidence="1">
    <location>
        <position position="100"/>
    </location>
</feature>
<feature type="binding site" evidence="1">
    <location>
        <position position="57"/>
    </location>
    <ligand>
        <name>ATP</name>
        <dbReference type="ChEBI" id="CHEBI:30616"/>
    </ligand>
</feature>
<feature type="binding site" evidence="1">
    <location>
        <position position="96"/>
    </location>
    <ligand>
        <name>ATP</name>
        <dbReference type="ChEBI" id="CHEBI:30616"/>
    </ligand>
</feature>
<feature type="binding site" evidence="1">
    <location>
        <position position="98"/>
    </location>
    <ligand>
        <name>Mg(2+)</name>
        <dbReference type="ChEBI" id="CHEBI:18420"/>
        <label>1</label>
    </ligand>
</feature>
<feature type="binding site" evidence="1">
    <location>
        <begin position="99"/>
        <end position="102"/>
    </location>
    <ligand>
        <name>substrate</name>
    </ligand>
</feature>
<feature type="binding site" evidence="1">
    <location>
        <position position="121"/>
    </location>
    <ligand>
        <name>substrate</name>
    </ligand>
</feature>
<feature type="binding site" evidence="1">
    <location>
        <position position="122"/>
    </location>
    <ligand>
        <name>Mg(2+)</name>
        <dbReference type="ChEBI" id="CHEBI:18420"/>
        <label>2</label>
    </ligand>
</feature>
<feature type="binding site" evidence="1">
    <location>
        <position position="245"/>
    </location>
    <ligand>
        <name>substrate</name>
    </ligand>
</feature>
<feature type="binding site" evidence="1">
    <location>
        <position position="273"/>
    </location>
    <ligand>
        <name>Mg(2+)</name>
        <dbReference type="ChEBI" id="CHEBI:18420"/>
        <label>2</label>
    </ligand>
</feature>
<feature type="binding site" evidence="1">
    <location>
        <begin position="317"/>
        <end position="319"/>
    </location>
    <ligand>
        <name>substrate</name>
    </ligand>
</feature>
<feature type="binding site" evidence="1">
    <location>
        <position position="500"/>
    </location>
    <ligand>
        <name>ATP</name>
        <dbReference type="ChEBI" id="CHEBI:30616"/>
    </ligand>
</feature>
<feature type="binding site" evidence="1">
    <location>
        <position position="537"/>
    </location>
    <ligand>
        <name>ATP</name>
        <dbReference type="ChEBI" id="CHEBI:30616"/>
    </ligand>
</feature>
<feature type="binding site" evidence="1">
    <location>
        <position position="538"/>
    </location>
    <ligand>
        <name>Mg(2+)</name>
        <dbReference type="ChEBI" id="CHEBI:18420"/>
        <label>1</label>
    </ligand>
</feature>
<feature type="binding site" evidence="1">
    <location>
        <position position="540"/>
    </location>
    <ligand>
        <name>substrate</name>
    </ligand>
</feature>
<keyword id="KW-0067">ATP-binding</keyword>
<keyword id="KW-0963">Cytoplasm</keyword>
<keyword id="KW-0436">Ligase</keyword>
<keyword id="KW-0460">Magnesium</keyword>
<keyword id="KW-0479">Metal-binding</keyword>
<keyword id="KW-0547">Nucleotide-binding</keyword>
<keyword id="KW-0658">Purine biosynthesis</keyword>
<sequence length="742" mass="79875">MSLLLEPNAAMIKEQKLYREMGLTDEEFARIEAILGRLPNYTETGIFSVMWSEHCSYKNSKPVLKKFPTDGPHVLQGPGEGAGIVDIGDGLAVAFKIESHNHPSAIEPYQGAATGVGGIIRDVFSMGARPIALLNSLRFGELTSPRVKYLFEHVVAGIAGYGNCIGIPTVGGEVQFDPAYEGNPLVNAMCVGIIRHEDIQRGVATGVGNTVMYVGAKTGRDGIHGATFASEELSEQSEAKRPAVQVGDPFMEKLLLEACLEAVKSDALVGIQDMGAAGLTSSSAEMASKGGFGIEMNLDLVPQRETGMTPYEMMLSESQERMLLVVEQGREEEIAAIFAKYGLEAKAIGKVTDDKMLRLFFHGEVVAEIPVDALAKDAPVYHKPSAEPDYYREFQAMPTYIPQIEDYNRTLLGLLAQPTIASKEWVYDQYDYMVRTNTVVAPGSDAAVVRIRGTNKALALTTDCNSRYLYLDPEMGGKIAVAEAARNVVCSGAKPLAITDCLNFGNPEKPDIFWQLEKAVDGMSEACRTLGTPVVSGNVSLYNETNGEAVYPTPVVGMVGLVDDLSHVTTQPFKQAGDLIYVIGEAKPEFGGSELQKWLEGRIFGKAPELDLAVEASRQRQLLTAIRAGVVASAHDVAEGGLAVALAECVIGASGLGANVTVSGDLVSELFSETQSRFVVSVKKEHQEAFEQLVEAKLIGEVTNDSILTVNGEHGGTVIRLSVDEMRNVWKGAIPCLLKSKD</sequence>
<name>PURL_GEOTN</name>
<protein>
    <recommendedName>
        <fullName evidence="1">Phosphoribosylformylglycinamidine synthase subunit PurL</fullName>
        <shortName evidence="1">FGAM synthase</shortName>
        <ecNumber evidence="1">6.3.5.3</ecNumber>
    </recommendedName>
    <alternativeName>
        <fullName evidence="1">Formylglycinamide ribonucleotide amidotransferase subunit II</fullName>
        <shortName evidence="1">FGAR amidotransferase II</shortName>
        <shortName evidence="1">FGAR-AT II</shortName>
    </alternativeName>
    <alternativeName>
        <fullName evidence="1">Glutamine amidotransferase PurL</fullName>
    </alternativeName>
    <alternativeName>
        <fullName evidence="1">Phosphoribosylformylglycinamidine synthase subunit II</fullName>
    </alternativeName>
</protein>
<gene>
    <name evidence="1" type="primary">purL</name>
    <name type="ordered locus">GTNG_0243</name>
</gene>
<proteinExistence type="inferred from homology"/>